<dbReference type="EMBL" id="AP004774">
    <property type="protein sequence ID" value="BAD15637.1"/>
    <property type="status" value="ALT_SEQ"/>
    <property type="molecule type" value="Genomic_DNA"/>
</dbReference>
<dbReference type="EMBL" id="AP008208">
    <property type="protein sequence ID" value="BAF10045.1"/>
    <property type="status" value="ALT_SEQ"/>
    <property type="molecule type" value="Genomic_DNA"/>
</dbReference>
<dbReference type="EMBL" id="AP014958">
    <property type="protein sequence ID" value="BAS80940.1"/>
    <property type="status" value="ALT_SEQ"/>
    <property type="molecule type" value="Genomic_DNA"/>
</dbReference>
<dbReference type="EMBL" id="CM000139">
    <property type="protein sequence ID" value="EAZ24630.1"/>
    <property type="molecule type" value="Genomic_DNA"/>
</dbReference>
<dbReference type="RefSeq" id="XP_015627075.1">
    <property type="nucleotide sequence ID" value="XM_015771589.1"/>
</dbReference>
<dbReference type="SMR" id="A3ABE1"/>
<dbReference type="FunCoup" id="A3ABE1">
    <property type="interactions" value="1825"/>
</dbReference>
<dbReference type="STRING" id="39947.A3ABE1"/>
<dbReference type="PaxDb" id="39947-A3ABE1"/>
<dbReference type="KEGG" id="dosa:Os02g0750400"/>
<dbReference type="eggNOG" id="KOG4197">
    <property type="taxonomic scope" value="Eukaryota"/>
</dbReference>
<dbReference type="HOGENOM" id="CLU_1302499_0_0_1"/>
<dbReference type="InParanoid" id="A3ABE1"/>
<dbReference type="OrthoDB" id="185373at2759"/>
<dbReference type="Proteomes" id="UP000000763">
    <property type="component" value="Chromosome 2"/>
</dbReference>
<dbReference type="Proteomes" id="UP000007752">
    <property type="component" value="Chromosome 2"/>
</dbReference>
<dbReference type="Proteomes" id="UP000059680">
    <property type="component" value="Chromosome 2"/>
</dbReference>
<dbReference type="GO" id="GO:0009507">
    <property type="term" value="C:chloroplast"/>
    <property type="evidence" value="ECO:0007669"/>
    <property type="project" value="UniProtKB-SubCell"/>
</dbReference>
<dbReference type="GO" id="GO:0003729">
    <property type="term" value="F:mRNA binding"/>
    <property type="evidence" value="ECO:0007669"/>
    <property type="project" value="InterPro"/>
</dbReference>
<dbReference type="GO" id="GO:0006397">
    <property type="term" value="P:mRNA processing"/>
    <property type="evidence" value="ECO:0007669"/>
    <property type="project" value="UniProtKB-KW"/>
</dbReference>
<dbReference type="GO" id="GO:0006417">
    <property type="term" value="P:regulation of translation"/>
    <property type="evidence" value="ECO:0007669"/>
    <property type="project" value="UniProtKB-KW"/>
</dbReference>
<dbReference type="GO" id="GO:0008380">
    <property type="term" value="P:RNA splicing"/>
    <property type="evidence" value="ECO:0007669"/>
    <property type="project" value="UniProtKB-KW"/>
</dbReference>
<dbReference type="FunFam" id="1.25.40.10:FF:000924">
    <property type="entry name" value="Pentatricopeptide repeat-containing protein At4g39620, chloroplastic"/>
    <property type="match status" value="1"/>
</dbReference>
<dbReference type="FunFam" id="1.25.40.10:FF:000291">
    <property type="entry name" value="Pentatricopeptide repeat-containing protein PPR5, chloroplastic"/>
    <property type="match status" value="1"/>
</dbReference>
<dbReference type="Gene3D" id="1.25.40.10">
    <property type="entry name" value="Tetratricopeptide repeat domain"/>
    <property type="match status" value="3"/>
</dbReference>
<dbReference type="InterPro" id="IPR002885">
    <property type="entry name" value="Pentatricopeptide_rpt"/>
</dbReference>
<dbReference type="InterPro" id="IPR044179">
    <property type="entry name" value="PPR5-like"/>
</dbReference>
<dbReference type="InterPro" id="IPR011990">
    <property type="entry name" value="TPR-like_helical_dom_sf"/>
</dbReference>
<dbReference type="NCBIfam" id="TIGR00756">
    <property type="entry name" value="PPR"/>
    <property type="match status" value="5"/>
</dbReference>
<dbReference type="PANTHER" id="PTHR47874">
    <property type="entry name" value="EXPRESSED PROTEIN"/>
    <property type="match status" value="1"/>
</dbReference>
<dbReference type="PANTHER" id="PTHR47874:SF5">
    <property type="entry name" value="PENTATRICOPEPTIDE REPEAT-CONTAINING PROTEIN PPR5 HOMOLOG, CHLOROPLASTIC"/>
    <property type="match status" value="1"/>
</dbReference>
<dbReference type="Pfam" id="PF01535">
    <property type="entry name" value="PPR"/>
    <property type="match status" value="2"/>
</dbReference>
<dbReference type="Pfam" id="PF13041">
    <property type="entry name" value="PPR_2"/>
    <property type="match status" value="2"/>
</dbReference>
<dbReference type="Pfam" id="PF13812">
    <property type="entry name" value="PPR_3"/>
    <property type="match status" value="1"/>
</dbReference>
<dbReference type="SUPFAM" id="SSF48452">
    <property type="entry name" value="TPR-like"/>
    <property type="match status" value="1"/>
</dbReference>
<dbReference type="PROSITE" id="PS51375">
    <property type="entry name" value="PPR"/>
    <property type="match status" value="9"/>
</dbReference>
<organism>
    <name type="scientific">Oryza sativa subsp. japonica</name>
    <name type="common">Rice</name>
    <dbReference type="NCBI Taxonomy" id="39947"/>
    <lineage>
        <taxon>Eukaryota</taxon>
        <taxon>Viridiplantae</taxon>
        <taxon>Streptophyta</taxon>
        <taxon>Embryophyta</taxon>
        <taxon>Tracheophyta</taxon>
        <taxon>Spermatophyta</taxon>
        <taxon>Magnoliopsida</taxon>
        <taxon>Liliopsida</taxon>
        <taxon>Poales</taxon>
        <taxon>Poaceae</taxon>
        <taxon>BOP clade</taxon>
        <taxon>Oryzoideae</taxon>
        <taxon>Oryzeae</taxon>
        <taxon>Oryzinae</taxon>
        <taxon>Oryza</taxon>
        <taxon>Oryza sativa</taxon>
    </lineage>
</organism>
<name>PPR5_ORYSJ</name>
<protein>
    <recommendedName>
        <fullName evidence="5">Pentatricopeptide repeat-containing protein PPR5 homolog, chloroplastic</fullName>
    </recommendedName>
</protein>
<keyword id="KW-0150">Chloroplast</keyword>
<keyword id="KW-0507">mRNA processing</keyword>
<keyword id="KW-0508">mRNA splicing</keyword>
<keyword id="KW-0934">Plastid</keyword>
<keyword id="KW-1185">Reference proteome</keyword>
<keyword id="KW-0677">Repeat</keyword>
<keyword id="KW-0809">Transit peptide</keyword>
<keyword id="KW-0810">Translation regulation</keyword>
<feature type="transit peptide" description="Chloroplast" evidence="2">
    <location>
        <begin position="1"/>
        <end position="29"/>
    </location>
</feature>
<feature type="chain" id="PRO_0000441903" description="Pentatricopeptide repeat-containing protein PPR5 homolog, chloroplastic">
    <location>
        <begin position="30"/>
        <end position="495"/>
    </location>
</feature>
<feature type="repeat" description="PPR 1" evidence="3">
    <location>
        <begin position="120"/>
        <end position="154"/>
    </location>
</feature>
<feature type="repeat" description="PPR 2" evidence="3">
    <location>
        <begin position="155"/>
        <end position="189"/>
    </location>
</feature>
<feature type="repeat" description="PPR 3" evidence="3">
    <location>
        <begin position="195"/>
        <end position="229"/>
    </location>
</feature>
<feature type="repeat" description="PPR 4" evidence="3">
    <location>
        <begin position="230"/>
        <end position="264"/>
    </location>
</feature>
<feature type="repeat" description="PPR 5" evidence="3">
    <location>
        <begin position="265"/>
        <end position="299"/>
    </location>
</feature>
<feature type="repeat" description="PPR 6" evidence="3">
    <location>
        <begin position="300"/>
        <end position="334"/>
    </location>
</feature>
<feature type="repeat" description="PPR 7" evidence="3">
    <location>
        <begin position="335"/>
        <end position="365"/>
    </location>
</feature>
<feature type="repeat" description="PPR 8" evidence="3">
    <location>
        <begin position="370"/>
        <end position="404"/>
    </location>
</feature>
<feature type="repeat" description="PPR 9" evidence="3">
    <location>
        <begin position="405"/>
        <end position="439"/>
    </location>
</feature>
<feature type="region of interest" description="Disordered" evidence="4">
    <location>
        <begin position="1"/>
        <end position="24"/>
    </location>
</feature>
<feature type="region of interest" description="Disordered" evidence="4">
    <location>
        <begin position="455"/>
        <end position="495"/>
    </location>
</feature>
<feature type="compositionally biased region" description="Polar residues" evidence="4">
    <location>
        <begin position="462"/>
        <end position="495"/>
    </location>
</feature>
<gene>
    <name evidence="7" type="ordered locus">Os02g0750400</name>
    <name evidence="5" type="ordered locus">LOC_Os02g51480</name>
    <name evidence="8" type="ORF">OsJ_08397</name>
    <name evidence="6" type="ORF">P0431B06.14</name>
</gene>
<accession>A3ABE1</accession>
<accession>A0A0P0VPH4</accession>
<accession>Q6Z8K6</accession>
<sequence length="495" mass="55636">MLAYPTTSSPWPPRHHGAAAAPAARRHMAAAAARGKRRGAGAAAAEGADEAAEAADLVRFFLRRTSGGKERLVAVLDRHVKVVRTEHCFLLFEELGRRDGWLQCLEVFRWMQKQRWYVADNGIYSKLISVMGRKGQIRMAMWLFSQMRNSGCRPDTSVYNSLIGTHLHSRDKSKALAKALGYFEKMKTIDRCQPNIVTYNILLRAFAQAGDTKQLDILFKDLDESPVSPDIYTYNGVMDAYGKNGMITEMESVLVRMKSNQCRPDVITFNILIDSYGRKQAFDKMEQVFKSLLRSKEKPTHPTFNSMITNYGKARLREKAECVLDKMTEMGFKPNYVTQECLIMMYAYCDCVSRARQIFDELVSSQNNVHLSSVNAMLDAYCMNGLPMEADQLLDSVIKKGAVPSASTYKLLYKAYTKANDKKLIQKLLKRMNSQGIVPNKKFFLDALEAFGNTDKKPRTVPSKNSASKPDVESANNSGTDTSSKPNLSVWQVAA</sequence>
<proteinExistence type="inferred from homology"/>
<comment type="function">
    <text evidence="1">Involved in the biogenesis of the plastid translation machinery by promoting the splicing of group II introns in chloroplasts.</text>
</comment>
<comment type="subcellular location">
    <subcellularLocation>
        <location evidence="2">Plastid</location>
        <location evidence="2">Chloroplast</location>
    </subcellularLocation>
</comment>
<comment type="similarity">
    <text evidence="5">Belongs to the PPR family. P subfamily.</text>
</comment>
<comment type="sequence caution" evidence="5">
    <conflict type="erroneous gene model prediction">
        <sequence resource="EMBL-CDS" id="BAD15637"/>
    </conflict>
</comment>
<comment type="sequence caution" evidence="5">
    <conflict type="erroneous gene model prediction">
        <sequence resource="EMBL-CDS" id="BAF10045"/>
    </conflict>
</comment>
<comment type="sequence caution" evidence="5">
    <conflict type="erroneous gene model prediction">
        <sequence resource="EMBL-CDS" id="BAS80940"/>
    </conflict>
</comment>
<reference key="1">
    <citation type="journal article" date="2005" name="Nature">
        <title>The map-based sequence of the rice genome.</title>
        <authorList>
            <consortium name="International rice genome sequencing project (IRGSP)"/>
        </authorList>
    </citation>
    <scope>NUCLEOTIDE SEQUENCE [LARGE SCALE GENOMIC DNA]</scope>
    <source>
        <strain>cv. Nipponbare</strain>
    </source>
</reference>
<reference key="2">
    <citation type="journal article" date="2008" name="Nucleic Acids Res.">
        <title>The rice annotation project database (RAP-DB): 2008 update.</title>
        <authorList>
            <consortium name="The rice annotation project (RAP)"/>
        </authorList>
    </citation>
    <scope>GENOME REANNOTATION</scope>
    <source>
        <strain>cv. Nipponbare</strain>
    </source>
</reference>
<reference key="3">
    <citation type="journal article" date="2013" name="Rice">
        <title>Improvement of the Oryza sativa Nipponbare reference genome using next generation sequence and optical map data.</title>
        <authorList>
            <person name="Kawahara Y."/>
            <person name="de la Bastide M."/>
            <person name="Hamilton J.P."/>
            <person name="Kanamori H."/>
            <person name="McCombie W.R."/>
            <person name="Ouyang S."/>
            <person name="Schwartz D.C."/>
            <person name="Tanaka T."/>
            <person name="Wu J."/>
            <person name="Zhou S."/>
            <person name="Childs K.L."/>
            <person name="Davidson R.M."/>
            <person name="Lin H."/>
            <person name="Quesada-Ocampo L."/>
            <person name="Vaillancourt B."/>
            <person name="Sakai H."/>
            <person name="Lee S.S."/>
            <person name="Kim J."/>
            <person name="Numa H."/>
            <person name="Itoh T."/>
            <person name="Buell C.R."/>
            <person name="Matsumoto T."/>
        </authorList>
    </citation>
    <scope>GENOME REANNOTATION</scope>
    <source>
        <strain>cv. Nipponbare</strain>
    </source>
</reference>
<reference key="4">
    <citation type="journal article" date="2005" name="PLoS Biol.">
        <title>The genomes of Oryza sativa: a history of duplications.</title>
        <authorList>
            <person name="Yu J."/>
            <person name="Wang J."/>
            <person name="Lin W."/>
            <person name="Li S."/>
            <person name="Li H."/>
            <person name="Zhou J."/>
            <person name="Ni P."/>
            <person name="Dong W."/>
            <person name="Hu S."/>
            <person name="Zeng C."/>
            <person name="Zhang J."/>
            <person name="Zhang Y."/>
            <person name="Li R."/>
            <person name="Xu Z."/>
            <person name="Li S."/>
            <person name="Li X."/>
            <person name="Zheng H."/>
            <person name="Cong L."/>
            <person name="Lin L."/>
            <person name="Yin J."/>
            <person name="Geng J."/>
            <person name="Li G."/>
            <person name="Shi J."/>
            <person name="Liu J."/>
            <person name="Lv H."/>
            <person name="Li J."/>
            <person name="Wang J."/>
            <person name="Deng Y."/>
            <person name="Ran L."/>
            <person name="Shi X."/>
            <person name="Wang X."/>
            <person name="Wu Q."/>
            <person name="Li C."/>
            <person name="Ren X."/>
            <person name="Wang J."/>
            <person name="Wang X."/>
            <person name="Li D."/>
            <person name="Liu D."/>
            <person name="Zhang X."/>
            <person name="Ji Z."/>
            <person name="Zhao W."/>
            <person name="Sun Y."/>
            <person name="Zhang Z."/>
            <person name="Bao J."/>
            <person name="Han Y."/>
            <person name="Dong L."/>
            <person name="Ji J."/>
            <person name="Chen P."/>
            <person name="Wu S."/>
            <person name="Liu J."/>
            <person name="Xiao Y."/>
            <person name="Bu D."/>
            <person name="Tan J."/>
            <person name="Yang L."/>
            <person name="Ye C."/>
            <person name="Zhang J."/>
            <person name="Xu J."/>
            <person name="Zhou Y."/>
            <person name="Yu Y."/>
            <person name="Zhang B."/>
            <person name="Zhuang S."/>
            <person name="Wei H."/>
            <person name="Liu B."/>
            <person name="Lei M."/>
            <person name="Yu H."/>
            <person name="Li Y."/>
            <person name="Xu H."/>
            <person name="Wei S."/>
            <person name="He X."/>
            <person name="Fang L."/>
            <person name="Zhang Z."/>
            <person name="Zhang Y."/>
            <person name="Huang X."/>
            <person name="Su Z."/>
            <person name="Tong W."/>
            <person name="Li J."/>
            <person name="Tong Z."/>
            <person name="Li S."/>
            <person name="Ye J."/>
            <person name="Wang L."/>
            <person name="Fang L."/>
            <person name="Lei T."/>
            <person name="Chen C.-S."/>
            <person name="Chen H.-C."/>
            <person name="Xu Z."/>
            <person name="Li H."/>
            <person name="Huang H."/>
            <person name="Zhang F."/>
            <person name="Xu H."/>
            <person name="Li N."/>
            <person name="Zhao C."/>
            <person name="Li S."/>
            <person name="Dong L."/>
            <person name="Huang Y."/>
            <person name="Li L."/>
            <person name="Xi Y."/>
            <person name="Qi Q."/>
            <person name="Li W."/>
            <person name="Zhang B."/>
            <person name="Hu W."/>
            <person name="Zhang Y."/>
            <person name="Tian X."/>
            <person name="Jiao Y."/>
            <person name="Liang X."/>
            <person name="Jin J."/>
            <person name="Gao L."/>
            <person name="Zheng W."/>
            <person name="Hao B."/>
            <person name="Liu S.-M."/>
            <person name="Wang W."/>
            <person name="Yuan L."/>
            <person name="Cao M."/>
            <person name="McDermott J."/>
            <person name="Samudrala R."/>
            <person name="Wang J."/>
            <person name="Wong G.K.-S."/>
            <person name="Yang H."/>
        </authorList>
    </citation>
    <scope>NUCLEOTIDE SEQUENCE [LARGE SCALE GENOMIC DNA]</scope>
    <source>
        <strain>cv. Nipponbare</strain>
    </source>
</reference>
<evidence type="ECO:0000250" key="1">
    <source>
        <dbReference type="UniProtKB" id="A7LN87"/>
    </source>
</evidence>
<evidence type="ECO:0000255" key="2"/>
<evidence type="ECO:0000255" key="3">
    <source>
        <dbReference type="PROSITE-ProRule" id="PRU00708"/>
    </source>
</evidence>
<evidence type="ECO:0000256" key="4">
    <source>
        <dbReference type="SAM" id="MobiDB-lite"/>
    </source>
</evidence>
<evidence type="ECO:0000305" key="5"/>
<evidence type="ECO:0000312" key="6">
    <source>
        <dbReference type="EMBL" id="BAD15637.1"/>
    </source>
</evidence>
<evidence type="ECO:0000312" key="7">
    <source>
        <dbReference type="EMBL" id="BAS80940.1"/>
    </source>
</evidence>
<evidence type="ECO:0000312" key="8">
    <source>
        <dbReference type="EMBL" id="EAZ24630.1"/>
    </source>
</evidence>